<accession>A0A0S1TP26</accession>
<feature type="chain" id="PRO_0000452575" description="Ferruginol synthase">
    <location>
        <begin position="1" status="less than"/>
        <end position="453"/>
    </location>
</feature>
<feature type="transmembrane region" description="Helical" evidence="3">
    <location>
        <begin position="15"/>
        <end position="35"/>
    </location>
</feature>
<feature type="binding site" description="axial binding residue" evidence="2">
    <location>
        <position position="397"/>
    </location>
    <ligand>
        <name>heme</name>
        <dbReference type="ChEBI" id="CHEBI:30413"/>
    </ligand>
    <ligandPart>
        <name>Fe</name>
        <dbReference type="ChEBI" id="CHEBI:18248"/>
    </ligandPart>
</feature>
<feature type="non-terminal residue" evidence="7">
    <location>
        <position position="1"/>
    </location>
</feature>
<comment type="function">
    <text evidence="5">Monooxygenase involved in the biosynthesis of labdane-related diterpenes natural products (PubMed:26976595). Catalyzes the oxidation of abietatriene to produce ferruginol (PubMed:26976595). Ferruginol is an intermediate in the biosynthesis of carnosate, a potent antioxidant (PubMed:26976595). May also convert miltiradiene into 11-oxomiltiradiene (PubMed:26976595).</text>
</comment>
<comment type="catalytic activity">
    <reaction evidence="5">
        <text>abieta-8,11,13-triene + reduced [NADPH--hemoprotein reductase] + O2 = ferruginol + oxidized [NADPH--hemoprotein reductase] + H2O + H(+)</text>
        <dbReference type="Rhea" id="RHEA:48080"/>
        <dbReference type="Rhea" id="RHEA-COMP:11964"/>
        <dbReference type="Rhea" id="RHEA-COMP:11965"/>
        <dbReference type="ChEBI" id="CHEBI:15377"/>
        <dbReference type="ChEBI" id="CHEBI:15378"/>
        <dbReference type="ChEBI" id="CHEBI:15379"/>
        <dbReference type="ChEBI" id="CHEBI:57618"/>
        <dbReference type="ChEBI" id="CHEBI:58210"/>
        <dbReference type="ChEBI" id="CHEBI:78274"/>
        <dbReference type="ChEBI" id="CHEBI:86062"/>
        <dbReference type="EC" id="1.14.14.175"/>
    </reaction>
    <physiologicalReaction direction="left-to-right" evidence="5">
        <dbReference type="Rhea" id="RHEA:48081"/>
    </physiologicalReaction>
</comment>
<comment type="catalytic activity">
    <reaction evidence="1">
        <text>ferruginol + reduced [NADPH--hemoprotein reductase] + O2 = 11-hydroxyferruginol + oxidized [NADPH--hemoprotein reductase] + H2O + H(+)</text>
        <dbReference type="Rhea" id="RHEA:55428"/>
        <dbReference type="Rhea" id="RHEA-COMP:11964"/>
        <dbReference type="Rhea" id="RHEA-COMP:11965"/>
        <dbReference type="ChEBI" id="CHEBI:15377"/>
        <dbReference type="ChEBI" id="CHEBI:15378"/>
        <dbReference type="ChEBI" id="CHEBI:15379"/>
        <dbReference type="ChEBI" id="CHEBI:57618"/>
        <dbReference type="ChEBI" id="CHEBI:58210"/>
        <dbReference type="ChEBI" id="CHEBI:78274"/>
        <dbReference type="ChEBI" id="CHEBI:138942"/>
        <dbReference type="EC" id="1.14.14.60"/>
    </reaction>
    <physiologicalReaction direction="left-to-right" evidence="1">
        <dbReference type="Rhea" id="RHEA:55429"/>
    </physiologicalReaction>
</comment>
<comment type="catalytic activity">
    <reaction evidence="5">
        <text>miltiradiene + 2 reduced [NADPH--hemoprotein reductase] + 2 O2 = 11-oxomiltiradiene + 2 oxidized [NADPH--hemoprotein reductase] + 3 H2O + 2 H(+)</text>
        <dbReference type="Rhea" id="RHEA:66796"/>
        <dbReference type="Rhea" id="RHEA-COMP:11964"/>
        <dbReference type="Rhea" id="RHEA-COMP:11965"/>
        <dbReference type="ChEBI" id="CHEBI:15377"/>
        <dbReference type="ChEBI" id="CHEBI:15378"/>
        <dbReference type="ChEBI" id="CHEBI:15379"/>
        <dbReference type="ChEBI" id="CHEBI:57618"/>
        <dbReference type="ChEBI" id="CHEBI:58210"/>
        <dbReference type="ChEBI" id="CHEBI:65037"/>
        <dbReference type="ChEBI" id="CHEBI:167496"/>
    </reaction>
    <physiologicalReaction direction="left-to-right" evidence="5">
        <dbReference type="Rhea" id="RHEA:66797"/>
    </physiologicalReaction>
</comment>
<comment type="cofactor">
    <cofactor evidence="2">
        <name>heme</name>
        <dbReference type="ChEBI" id="CHEBI:30413"/>
    </cofactor>
</comment>
<comment type="pathway">
    <text evidence="8">Secondary metabolite biosynthesis; terpenoid biosynthesis.</text>
</comment>
<comment type="subcellular location">
    <subcellularLocation>
        <location evidence="3">Membrane</location>
        <topology evidence="3">Single-pass membrane protein</topology>
    </subcellularLocation>
</comment>
<comment type="tissue specificity">
    <text evidence="4">Expressed in leaf glandular trichomes.</text>
</comment>
<comment type="similarity">
    <text evidence="7">Belongs to the cytochrome P450 family.</text>
</comment>
<gene>
    <name evidence="6" type="primary">CYP76AH24</name>
</gene>
<keyword id="KW-0349">Heme</keyword>
<keyword id="KW-0408">Iron</keyword>
<keyword id="KW-0472">Membrane</keyword>
<keyword id="KW-0479">Metal-binding</keyword>
<keyword id="KW-0503">Monooxygenase</keyword>
<keyword id="KW-0560">Oxidoreductase</keyword>
<keyword id="KW-0812">Transmembrane</keyword>
<keyword id="KW-1133">Transmembrane helix</keyword>
<name>C76H2_SALPM</name>
<proteinExistence type="evidence at protein level"/>
<reference key="1">
    <citation type="journal article" date="2015" name="BMC Genomics">
        <title>Combined metabolome and transcriptome profiling provides new insights into diterpene biosynthesis in S. pomifera glandular trichomes.</title>
        <authorList>
            <person name="Trikka F.A."/>
            <person name="Nikolaidis A."/>
            <person name="Ignea C."/>
            <person name="Tsaballa A."/>
            <person name="Tziveleka L.A."/>
            <person name="Ioannou E."/>
            <person name="Roussis V."/>
            <person name="Stea E.A."/>
            <person name="Bozic D."/>
            <person name="Argiriou A."/>
            <person name="Kanellis A.K."/>
            <person name="Kampranis S.C."/>
            <person name="Makris A.M."/>
        </authorList>
    </citation>
    <scope>NUCLEOTIDE SEQUENCE [MRNA]</scope>
    <scope>TISSUE SPECIFICITY</scope>
    <source>
        <tissue>Trichome gland</tissue>
    </source>
</reference>
<reference key="2">
    <citation type="journal article" date="2016" name="Proc. Natl. Acad. Sci. U.S.A.">
        <title>Carnosic acid biosynthesis elucidated by a synthetic biology platform.</title>
        <authorList>
            <person name="Ignea C."/>
            <person name="Athanasakoglou A."/>
            <person name="Ioannou E."/>
            <person name="Georgantea P."/>
            <person name="Trikka F.A."/>
            <person name="Loupassaki S."/>
            <person name="Roussis V."/>
            <person name="Makris A.M."/>
            <person name="Kampranis S.C."/>
        </authorList>
    </citation>
    <scope>FUNCTION</scope>
    <scope>CATALYTIC ACTIVITY</scope>
</reference>
<reference key="3">
    <citation type="journal article" date="2019" name="Nat. Prod. Rep.">
        <title>Non-volatile natural products in plant glandular trichomes: chemistry, biological activities and biosynthesis.</title>
        <authorList>
            <person name="Liu Y."/>
            <person name="Jing S.-X."/>
            <person name="Luo S.-H."/>
            <person name="Li S.-H."/>
        </authorList>
    </citation>
    <scope>PATHWAY</scope>
    <scope>REVIEW</scope>
</reference>
<organism>
    <name type="scientific">Salvia pomifera</name>
    <name type="common">Apple sage</name>
    <dbReference type="NCBI Taxonomy" id="396869"/>
    <lineage>
        <taxon>Eukaryota</taxon>
        <taxon>Viridiplantae</taxon>
        <taxon>Streptophyta</taxon>
        <taxon>Embryophyta</taxon>
        <taxon>Tracheophyta</taxon>
        <taxon>Spermatophyta</taxon>
        <taxon>Magnoliopsida</taxon>
        <taxon>eudicotyledons</taxon>
        <taxon>Gunneridae</taxon>
        <taxon>Pentapetalae</taxon>
        <taxon>asterids</taxon>
        <taxon>lamiids</taxon>
        <taxon>Lamiales</taxon>
        <taxon>Lamiaceae</taxon>
        <taxon>Nepetoideae</taxon>
        <taxon>Mentheae</taxon>
        <taxon>Salviinae</taxon>
        <taxon>Salvia</taxon>
        <taxon>Salvia incertae sedis</taxon>
    </lineage>
</organism>
<protein>
    <recommendedName>
        <fullName evidence="7">Ferruginol synthase</fullName>
        <ecNumber evidence="5">1.14.14.175</ecNumber>
    </recommendedName>
    <alternativeName>
        <fullName evidence="7">11-oxomiltiradiene synthase</fullName>
        <ecNumber evidence="5">1.14.14.-</ecNumber>
    </alternativeName>
    <alternativeName>
        <fullName evidence="6">Cytochrome P450 76AH24</fullName>
        <shortName evidence="6">SpCYP76AH24</shortName>
    </alternativeName>
    <alternativeName>
        <fullName evidence="1">Ferruginol monooxygenase</fullName>
        <shortName evidence="1">11-hydroxyferruginol synthase</shortName>
        <ecNumber evidence="1">1.14.14.60</ecNumber>
    </alternativeName>
</protein>
<sequence>MLQLGSQPHETFAKLSKKYGPLMSIHLGSLYTVIVSSPEMAKEIMHKYGQVFSGRTIAQAVHACDHDKISMGFLPVGAEWRDMRKICKEQMFSHQSMEDSQNLRKQKLQQLLDYTQKCSEEGRGIDIREAAFITTLNLMSATLFSMQATEFDSKVTMEFKEIIEGVASIVGVPNFADYFPILRPFDPQGVKRRADVYFGRLLGLIEGYLNERIEFRKANPNAPKKDDFLETLVDALDAKDYKLKTEHLTHLMLDLFVGGSETSTTEIEWIMWELVASPEKMAKVKAELKSVMGGEKVVDESMMPRLPYLQAVVKESMRLHPPGPLLLPRKAESDQVVNGYLIPKGTQVLINAWAMGRDSSLWKNPDSFEPERFLDQKIDFKGTDYELIPFGSGRRVCPGMPLANRILHTVTATLVHNFDWKLERPEANDAHKGVLFGFAVRRAVPLKIVPIKA</sequence>
<dbReference type="EC" id="1.14.14.175" evidence="5"/>
<dbReference type="EC" id="1.14.14.-" evidence="5"/>
<dbReference type="EC" id="1.14.14.60" evidence="1"/>
<dbReference type="EMBL" id="KT157044">
    <property type="protein sequence ID" value="ALM25796.1"/>
    <property type="molecule type" value="mRNA"/>
</dbReference>
<dbReference type="SMR" id="A0A0S1TP26"/>
<dbReference type="KEGG" id="ag:ALM25796"/>
<dbReference type="BioCyc" id="MetaCyc:MONOMER-21175"/>
<dbReference type="UniPathway" id="UPA00213"/>
<dbReference type="GO" id="GO:0016020">
    <property type="term" value="C:membrane"/>
    <property type="evidence" value="ECO:0007669"/>
    <property type="project" value="UniProtKB-SubCell"/>
</dbReference>
<dbReference type="GO" id="GO:0020037">
    <property type="term" value="F:heme binding"/>
    <property type="evidence" value="ECO:0007669"/>
    <property type="project" value="InterPro"/>
</dbReference>
<dbReference type="GO" id="GO:0005506">
    <property type="term" value="F:iron ion binding"/>
    <property type="evidence" value="ECO:0007669"/>
    <property type="project" value="InterPro"/>
</dbReference>
<dbReference type="GO" id="GO:0016712">
    <property type="term" value="F:oxidoreductase activity, acting on paired donors, with incorporation or reduction of molecular oxygen, reduced flavin or flavoprotein as one donor, and incorporation of one atom of oxygen"/>
    <property type="evidence" value="ECO:0000314"/>
    <property type="project" value="UniProtKB"/>
</dbReference>
<dbReference type="GO" id="GO:0016102">
    <property type="term" value="P:diterpenoid biosynthetic process"/>
    <property type="evidence" value="ECO:0000314"/>
    <property type="project" value="UniProtKB"/>
</dbReference>
<dbReference type="CDD" id="cd11073">
    <property type="entry name" value="CYP76-like"/>
    <property type="match status" value="1"/>
</dbReference>
<dbReference type="FunFam" id="1.10.630.10:FF:000126">
    <property type="entry name" value="Predicted protein"/>
    <property type="match status" value="1"/>
</dbReference>
<dbReference type="Gene3D" id="1.10.630.10">
    <property type="entry name" value="Cytochrome P450"/>
    <property type="match status" value="1"/>
</dbReference>
<dbReference type="InterPro" id="IPR001128">
    <property type="entry name" value="Cyt_P450"/>
</dbReference>
<dbReference type="InterPro" id="IPR017972">
    <property type="entry name" value="Cyt_P450_CS"/>
</dbReference>
<dbReference type="InterPro" id="IPR002401">
    <property type="entry name" value="Cyt_P450_E_grp-I"/>
</dbReference>
<dbReference type="InterPro" id="IPR036396">
    <property type="entry name" value="Cyt_P450_sf"/>
</dbReference>
<dbReference type="PANTHER" id="PTHR47950">
    <property type="entry name" value="CYTOCHROME P450, FAMILY 76, SUBFAMILY C, POLYPEPTIDE 5-RELATED"/>
    <property type="match status" value="1"/>
</dbReference>
<dbReference type="PANTHER" id="PTHR47950:SF4">
    <property type="entry name" value="GERANIOL 8-HYDROXYLASE-LIKE"/>
    <property type="match status" value="1"/>
</dbReference>
<dbReference type="Pfam" id="PF00067">
    <property type="entry name" value="p450"/>
    <property type="match status" value="1"/>
</dbReference>
<dbReference type="PRINTS" id="PR00463">
    <property type="entry name" value="EP450I"/>
</dbReference>
<dbReference type="PRINTS" id="PR00385">
    <property type="entry name" value="P450"/>
</dbReference>
<dbReference type="SUPFAM" id="SSF48264">
    <property type="entry name" value="Cytochrome P450"/>
    <property type="match status" value="1"/>
</dbReference>
<dbReference type="PROSITE" id="PS00086">
    <property type="entry name" value="CYTOCHROME_P450"/>
    <property type="match status" value="1"/>
</dbReference>
<evidence type="ECO:0000250" key="1">
    <source>
        <dbReference type="UniProtKB" id="A0A0C5QRZ2"/>
    </source>
</evidence>
<evidence type="ECO:0000250" key="2">
    <source>
        <dbReference type="UniProtKB" id="Q94IP1"/>
    </source>
</evidence>
<evidence type="ECO:0000255" key="3"/>
<evidence type="ECO:0000269" key="4">
    <source>
    </source>
</evidence>
<evidence type="ECO:0000269" key="5">
    <source>
    </source>
</evidence>
<evidence type="ECO:0000303" key="6">
    <source>
    </source>
</evidence>
<evidence type="ECO:0000305" key="7"/>
<evidence type="ECO:0000305" key="8">
    <source>
    </source>
</evidence>